<comment type="function">
    <text evidence="1">NDH-1 shuttles electrons from an unknown electron donor, via FMN and iron-sulfur (Fe-S) centers, to quinones in the respiratory and/or the photosynthetic chain. The immediate electron acceptor for the enzyme in this species is believed to be plastoquinone. Couples the redox reaction to proton translocation, and thus conserves the redox energy in a proton gradient. Cyanobacterial NDH-1 also plays a role in inorganic carbon-concentration.</text>
</comment>
<comment type="catalytic activity">
    <reaction evidence="1">
        <text>a plastoquinone + NADH + (n+1) H(+)(in) = a plastoquinol + NAD(+) + n H(+)(out)</text>
        <dbReference type="Rhea" id="RHEA:42608"/>
        <dbReference type="Rhea" id="RHEA-COMP:9561"/>
        <dbReference type="Rhea" id="RHEA-COMP:9562"/>
        <dbReference type="ChEBI" id="CHEBI:15378"/>
        <dbReference type="ChEBI" id="CHEBI:17757"/>
        <dbReference type="ChEBI" id="CHEBI:57540"/>
        <dbReference type="ChEBI" id="CHEBI:57945"/>
        <dbReference type="ChEBI" id="CHEBI:62192"/>
    </reaction>
</comment>
<comment type="catalytic activity">
    <reaction evidence="1">
        <text>a plastoquinone + NADPH + (n+1) H(+)(in) = a plastoquinol + NADP(+) + n H(+)(out)</text>
        <dbReference type="Rhea" id="RHEA:42612"/>
        <dbReference type="Rhea" id="RHEA-COMP:9561"/>
        <dbReference type="Rhea" id="RHEA-COMP:9562"/>
        <dbReference type="ChEBI" id="CHEBI:15378"/>
        <dbReference type="ChEBI" id="CHEBI:17757"/>
        <dbReference type="ChEBI" id="CHEBI:57783"/>
        <dbReference type="ChEBI" id="CHEBI:58349"/>
        <dbReference type="ChEBI" id="CHEBI:62192"/>
    </reaction>
</comment>
<comment type="subunit">
    <text evidence="1">NDH-1 can be composed of about 15 different subunits; different subcomplexes with different compositions have been identified which probably have different functions.</text>
</comment>
<comment type="subcellular location">
    <subcellularLocation>
        <location evidence="1">Cellular thylakoid membrane</location>
        <topology evidence="1">Peripheral membrane protein</topology>
        <orientation evidence="1">Cytoplasmic side</orientation>
    </subcellularLocation>
</comment>
<comment type="similarity">
    <text evidence="1">Belongs to the complex I NdhO subunit family.</text>
</comment>
<keyword id="KW-0472">Membrane</keyword>
<keyword id="KW-0520">NAD</keyword>
<keyword id="KW-0521">NADP</keyword>
<keyword id="KW-0618">Plastoquinone</keyword>
<keyword id="KW-0874">Quinone</keyword>
<keyword id="KW-1185">Reference proteome</keyword>
<keyword id="KW-0793">Thylakoid</keyword>
<keyword id="KW-1278">Translocase</keyword>
<keyword id="KW-0813">Transport</keyword>
<proteinExistence type="inferred from homology"/>
<feature type="chain" id="PRO_0000353648" description="NAD(P)H-quinone oxidoreductase subunit O">
    <location>
        <begin position="1"/>
        <end position="87"/>
    </location>
</feature>
<feature type="region of interest" description="Disordered" evidence="2">
    <location>
        <begin position="1"/>
        <end position="23"/>
    </location>
</feature>
<feature type="compositionally biased region" description="Basic and acidic residues" evidence="2">
    <location>
        <begin position="1"/>
        <end position="10"/>
    </location>
</feature>
<evidence type="ECO:0000255" key="1">
    <source>
        <dbReference type="HAMAP-Rule" id="MF_01354"/>
    </source>
</evidence>
<evidence type="ECO:0000256" key="2">
    <source>
        <dbReference type="SAM" id="MobiDB-lite"/>
    </source>
</evidence>
<accession>Q46HQ2</accession>
<gene>
    <name evidence="1" type="primary">ndhO</name>
    <name type="ordered locus">PMN2A_1488</name>
</gene>
<sequence>MSEQTGKVDDSQSPPKVQKKLRKGDLVKVDREKYSNSLESKASDTNLPEYIFQGPGEVLLIKGDYCQVRWRRPVPDVWINSDHIVSY</sequence>
<organism>
    <name type="scientific">Prochlorococcus marinus (strain NATL2A)</name>
    <dbReference type="NCBI Taxonomy" id="59920"/>
    <lineage>
        <taxon>Bacteria</taxon>
        <taxon>Bacillati</taxon>
        <taxon>Cyanobacteriota</taxon>
        <taxon>Cyanophyceae</taxon>
        <taxon>Synechococcales</taxon>
        <taxon>Prochlorococcaceae</taxon>
        <taxon>Prochlorococcus</taxon>
    </lineage>
</organism>
<protein>
    <recommendedName>
        <fullName evidence="1">NAD(P)H-quinone oxidoreductase subunit O</fullName>
        <ecNumber evidence="1">7.1.1.-</ecNumber>
    </recommendedName>
    <alternativeName>
        <fullName evidence="1">NAD(P)H dehydrogenase I subunit O</fullName>
    </alternativeName>
    <alternativeName>
        <fullName>NDH-1 subunit O</fullName>
    </alternativeName>
    <alternativeName>
        <fullName>NDH-O</fullName>
    </alternativeName>
</protein>
<dbReference type="EC" id="7.1.1.-" evidence="1"/>
<dbReference type="EMBL" id="CP000095">
    <property type="protein sequence ID" value="AAZ58976.1"/>
    <property type="molecule type" value="Genomic_DNA"/>
</dbReference>
<dbReference type="RefSeq" id="WP_011294121.1">
    <property type="nucleotide sequence ID" value="NC_007335.2"/>
</dbReference>
<dbReference type="SMR" id="Q46HQ2"/>
<dbReference type="STRING" id="59920.PMN2A_1488"/>
<dbReference type="KEGG" id="pmn:PMN2A_1488"/>
<dbReference type="HOGENOM" id="CLU_195299_0_0_3"/>
<dbReference type="OrthoDB" id="426633at2"/>
<dbReference type="PhylomeDB" id="Q46HQ2"/>
<dbReference type="Proteomes" id="UP000002535">
    <property type="component" value="Chromosome"/>
</dbReference>
<dbReference type="GO" id="GO:0031676">
    <property type="term" value="C:plasma membrane-derived thylakoid membrane"/>
    <property type="evidence" value="ECO:0007669"/>
    <property type="project" value="UniProtKB-SubCell"/>
</dbReference>
<dbReference type="GO" id="GO:0016655">
    <property type="term" value="F:oxidoreductase activity, acting on NAD(P)H, quinone or similar compound as acceptor"/>
    <property type="evidence" value="ECO:0007669"/>
    <property type="project" value="UniProtKB-UniRule"/>
</dbReference>
<dbReference type="GO" id="GO:0048038">
    <property type="term" value="F:quinone binding"/>
    <property type="evidence" value="ECO:0007669"/>
    <property type="project" value="UniProtKB-KW"/>
</dbReference>
<dbReference type="HAMAP" id="MF_01354">
    <property type="entry name" value="NDH1_NDH1O"/>
    <property type="match status" value="1"/>
</dbReference>
<dbReference type="InterPro" id="IPR020905">
    <property type="entry name" value="NdhO"/>
</dbReference>
<dbReference type="Pfam" id="PF11910">
    <property type="entry name" value="NdhO"/>
    <property type="match status" value="1"/>
</dbReference>
<reference key="1">
    <citation type="journal article" date="2007" name="PLoS Genet.">
        <title>Patterns and implications of gene gain and loss in the evolution of Prochlorococcus.</title>
        <authorList>
            <person name="Kettler G.C."/>
            <person name="Martiny A.C."/>
            <person name="Huang K."/>
            <person name="Zucker J."/>
            <person name="Coleman M.L."/>
            <person name="Rodrigue S."/>
            <person name="Chen F."/>
            <person name="Lapidus A."/>
            <person name="Ferriera S."/>
            <person name="Johnson J."/>
            <person name="Steglich C."/>
            <person name="Church G.M."/>
            <person name="Richardson P."/>
            <person name="Chisholm S.W."/>
        </authorList>
    </citation>
    <scope>NUCLEOTIDE SEQUENCE [LARGE SCALE GENOMIC DNA]</scope>
    <source>
        <strain>NATL2A</strain>
    </source>
</reference>
<name>NDHO_PROMT</name>